<keyword id="KW-0131">Cell cycle</keyword>
<keyword id="KW-0132">Cell division</keyword>
<keyword id="KW-0175">Coiled coil</keyword>
<keyword id="KW-0963">Cytoplasm</keyword>
<keyword id="KW-1185">Reference proteome</keyword>
<keyword id="KW-0717">Septation</keyword>
<evidence type="ECO:0000255" key="1">
    <source>
        <dbReference type="HAMAP-Rule" id="MF_01196"/>
    </source>
</evidence>
<evidence type="ECO:0000256" key="2">
    <source>
        <dbReference type="SAM" id="MobiDB-lite"/>
    </source>
</evidence>
<comment type="function">
    <text evidence="1">Non-essential, abundant cell division factor that is required for proper Z-ring formation. It is recruited early to the divisome by direct interaction with FtsZ, stimulating Z-ring assembly and thereby promoting cell division earlier in the cell cycle. Its recruitment to the Z-ring requires functional FtsA or ZipA.</text>
</comment>
<comment type="subunit">
    <text evidence="1">Homodimer. The ends of the coiled-coil dimer bind to each other, forming polymers. Interacts with FtsZ.</text>
</comment>
<comment type="subcellular location">
    <subcellularLocation>
        <location>Cytoplasm</location>
    </subcellularLocation>
    <text evidence="1">Localizes to the septum at mid-cell, in a FtsZ-like pattern.</text>
</comment>
<comment type="similarity">
    <text evidence="1">Belongs to the ZapB family.</text>
</comment>
<protein>
    <recommendedName>
        <fullName evidence="1">Cell division protein ZapB</fullName>
    </recommendedName>
</protein>
<organism>
    <name type="scientific">Citrobacter koseri (strain ATCC BAA-895 / CDC 4225-83 / SGSC4696)</name>
    <dbReference type="NCBI Taxonomy" id="290338"/>
    <lineage>
        <taxon>Bacteria</taxon>
        <taxon>Pseudomonadati</taxon>
        <taxon>Pseudomonadota</taxon>
        <taxon>Gammaproteobacteria</taxon>
        <taxon>Enterobacterales</taxon>
        <taxon>Enterobacteriaceae</taxon>
        <taxon>Citrobacter</taxon>
    </lineage>
</organism>
<accession>A8AKZ7</accession>
<gene>
    <name evidence="1" type="primary">zapB</name>
    <name type="ordered locus">CKO_03069</name>
</gene>
<dbReference type="EMBL" id="CP000822">
    <property type="protein sequence ID" value="ABV14160.1"/>
    <property type="molecule type" value="Genomic_DNA"/>
</dbReference>
<dbReference type="SMR" id="A8AKZ7"/>
<dbReference type="STRING" id="290338.CKO_03069"/>
<dbReference type="KEGG" id="cko:CKO_03069"/>
<dbReference type="HOGENOM" id="CLU_171174_2_0_6"/>
<dbReference type="OrthoDB" id="6554593at2"/>
<dbReference type="Proteomes" id="UP000008148">
    <property type="component" value="Chromosome"/>
</dbReference>
<dbReference type="GO" id="GO:0005737">
    <property type="term" value="C:cytoplasm"/>
    <property type="evidence" value="ECO:0007669"/>
    <property type="project" value="UniProtKB-SubCell"/>
</dbReference>
<dbReference type="GO" id="GO:0000917">
    <property type="term" value="P:division septum assembly"/>
    <property type="evidence" value="ECO:0007669"/>
    <property type="project" value="UniProtKB-KW"/>
</dbReference>
<dbReference type="GO" id="GO:0043093">
    <property type="term" value="P:FtsZ-dependent cytokinesis"/>
    <property type="evidence" value="ECO:0007669"/>
    <property type="project" value="UniProtKB-UniRule"/>
</dbReference>
<dbReference type="FunFam" id="1.20.5.340:FF:000014">
    <property type="entry name" value="Cell division protein ZapB"/>
    <property type="match status" value="1"/>
</dbReference>
<dbReference type="Gene3D" id="1.20.5.340">
    <property type="match status" value="1"/>
</dbReference>
<dbReference type="HAMAP" id="MF_01196">
    <property type="entry name" value="ZapB"/>
    <property type="match status" value="1"/>
</dbReference>
<dbReference type="InterPro" id="IPR009252">
    <property type="entry name" value="Cell_div_ZapB"/>
</dbReference>
<dbReference type="NCBIfam" id="NF011951">
    <property type="entry name" value="PRK15422.1"/>
    <property type="match status" value="1"/>
</dbReference>
<dbReference type="Pfam" id="PF06005">
    <property type="entry name" value="ZapB"/>
    <property type="match status" value="1"/>
</dbReference>
<name>ZAPB_CITK8</name>
<sequence>MAMSLEVFEKLEAKVQQAIDTITLLQMEIEELKEKNNSLAQDVQSAQHQREELERENNHLKEQQSGWQDRLQALLGRMEEV</sequence>
<proteinExistence type="inferred from homology"/>
<reference key="1">
    <citation type="submission" date="2007-08" db="EMBL/GenBank/DDBJ databases">
        <authorList>
            <consortium name="The Citrobacter koseri Genome Sequencing Project"/>
            <person name="McClelland M."/>
            <person name="Sanderson E.K."/>
            <person name="Porwollik S."/>
            <person name="Spieth J."/>
            <person name="Clifton W.S."/>
            <person name="Latreille P."/>
            <person name="Courtney L."/>
            <person name="Wang C."/>
            <person name="Pepin K."/>
            <person name="Bhonagiri V."/>
            <person name="Nash W."/>
            <person name="Johnson M."/>
            <person name="Thiruvilangam P."/>
            <person name="Wilson R."/>
        </authorList>
    </citation>
    <scope>NUCLEOTIDE SEQUENCE [LARGE SCALE GENOMIC DNA]</scope>
    <source>
        <strain>ATCC BAA-895 / CDC 4225-83 / SGSC4696</strain>
    </source>
</reference>
<feature type="chain" id="PRO_0000333895" description="Cell division protein ZapB">
    <location>
        <begin position="1"/>
        <end position="81"/>
    </location>
</feature>
<feature type="region of interest" description="Disordered" evidence="2">
    <location>
        <begin position="38"/>
        <end position="67"/>
    </location>
</feature>
<feature type="coiled-coil region" evidence="1">
    <location>
        <begin position="6"/>
        <end position="80"/>
    </location>
</feature>
<feature type="compositionally biased region" description="Polar residues" evidence="2">
    <location>
        <begin position="38"/>
        <end position="47"/>
    </location>
</feature>
<feature type="compositionally biased region" description="Basic and acidic residues" evidence="2">
    <location>
        <begin position="48"/>
        <end position="62"/>
    </location>
</feature>